<dbReference type="EC" id="4.1.1.39" evidence="1"/>
<dbReference type="EMBL" id="CP000578">
    <property type="protein sequence ID" value="ABN79082.1"/>
    <property type="molecule type" value="Genomic_DNA"/>
</dbReference>
<dbReference type="RefSeq" id="WP_002723913.1">
    <property type="nucleotide sequence ID" value="NC_009050.1"/>
</dbReference>
<dbReference type="SMR" id="A3PRW6"/>
<dbReference type="KEGG" id="rsh:Rsph17029_4004"/>
<dbReference type="HOGENOM" id="CLU_031450_3_1_5"/>
<dbReference type="GO" id="GO:0000287">
    <property type="term" value="F:magnesium ion binding"/>
    <property type="evidence" value="ECO:0007669"/>
    <property type="project" value="UniProtKB-UniRule"/>
</dbReference>
<dbReference type="GO" id="GO:0004497">
    <property type="term" value="F:monooxygenase activity"/>
    <property type="evidence" value="ECO:0007669"/>
    <property type="project" value="UniProtKB-KW"/>
</dbReference>
<dbReference type="GO" id="GO:0016984">
    <property type="term" value="F:ribulose-bisphosphate carboxylase activity"/>
    <property type="evidence" value="ECO:0007669"/>
    <property type="project" value="UniProtKB-UniRule"/>
</dbReference>
<dbReference type="GO" id="GO:0019253">
    <property type="term" value="P:reductive pentose-phosphate cycle"/>
    <property type="evidence" value="ECO:0007669"/>
    <property type="project" value="UniProtKB-KW"/>
</dbReference>
<dbReference type="CDD" id="cd08211">
    <property type="entry name" value="RuBisCO_large_II"/>
    <property type="match status" value="1"/>
</dbReference>
<dbReference type="Gene3D" id="3.20.20.110">
    <property type="entry name" value="Ribulose bisphosphate carboxylase, large subunit, C-terminal domain"/>
    <property type="match status" value="1"/>
</dbReference>
<dbReference type="Gene3D" id="3.30.70.150">
    <property type="entry name" value="RuBisCO large subunit, N-terminal domain"/>
    <property type="match status" value="1"/>
</dbReference>
<dbReference type="HAMAP" id="MF_01339">
    <property type="entry name" value="RuBisCO_L_type2"/>
    <property type="match status" value="1"/>
</dbReference>
<dbReference type="InterPro" id="IPR033966">
    <property type="entry name" value="RuBisCO"/>
</dbReference>
<dbReference type="InterPro" id="IPR020878">
    <property type="entry name" value="RuBisCo_large_chain_AS"/>
</dbReference>
<dbReference type="InterPro" id="IPR000685">
    <property type="entry name" value="RuBisCO_lsu_C"/>
</dbReference>
<dbReference type="InterPro" id="IPR036376">
    <property type="entry name" value="RuBisCO_lsu_C_sf"/>
</dbReference>
<dbReference type="InterPro" id="IPR017443">
    <property type="entry name" value="RuBisCO_lsu_fd_N"/>
</dbReference>
<dbReference type="InterPro" id="IPR036422">
    <property type="entry name" value="RuBisCO_lsu_N_sf"/>
</dbReference>
<dbReference type="InterPro" id="IPR020871">
    <property type="entry name" value="RuBisCO_lsuII"/>
</dbReference>
<dbReference type="NCBIfam" id="NF010002">
    <property type="entry name" value="PRK13475.1"/>
    <property type="match status" value="1"/>
</dbReference>
<dbReference type="PANTHER" id="PTHR42704">
    <property type="entry name" value="RIBULOSE BISPHOSPHATE CARBOXYLASE"/>
    <property type="match status" value="1"/>
</dbReference>
<dbReference type="PANTHER" id="PTHR42704:SF17">
    <property type="entry name" value="RIBULOSE BISPHOSPHATE CARBOXYLASE LARGE CHAIN"/>
    <property type="match status" value="1"/>
</dbReference>
<dbReference type="Pfam" id="PF00016">
    <property type="entry name" value="RuBisCO_large"/>
    <property type="match status" value="1"/>
</dbReference>
<dbReference type="Pfam" id="PF02788">
    <property type="entry name" value="RuBisCO_large_N"/>
    <property type="match status" value="1"/>
</dbReference>
<dbReference type="SFLD" id="SFLDS00014">
    <property type="entry name" value="RuBisCO"/>
    <property type="match status" value="1"/>
</dbReference>
<dbReference type="SFLD" id="SFLDG00301">
    <property type="entry name" value="RuBisCO-like_proteins"/>
    <property type="match status" value="1"/>
</dbReference>
<dbReference type="SUPFAM" id="SSF51649">
    <property type="entry name" value="RuBisCo, C-terminal domain"/>
    <property type="match status" value="1"/>
</dbReference>
<dbReference type="SUPFAM" id="SSF54966">
    <property type="entry name" value="RuBisCO, large subunit, small (N-terminal) domain"/>
    <property type="match status" value="1"/>
</dbReference>
<dbReference type="PROSITE" id="PS00157">
    <property type="entry name" value="RUBISCO_LARGE"/>
    <property type="match status" value="1"/>
</dbReference>
<feature type="chain" id="PRO_1000067651" description="Ribulose bisphosphate carboxylase">
    <location>
        <begin position="1"/>
        <end position="459"/>
    </location>
</feature>
<feature type="active site" description="Proton acceptor" evidence="1">
    <location>
        <position position="166"/>
    </location>
</feature>
<feature type="active site" description="Proton acceptor" evidence="1">
    <location>
        <position position="287"/>
    </location>
</feature>
<feature type="binding site" description="in homodimeric partner" evidence="1">
    <location>
        <position position="111"/>
    </location>
    <ligand>
        <name>substrate</name>
    </ligand>
</feature>
<feature type="binding site" evidence="1">
    <location>
        <position position="168"/>
    </location>
    <ligand>
        <name>substrate</name>
    </ligand>
</feature>
<feature type="binding site" description="via carbamate group" evidence="1">
    <location>
        <position position="191"/>
    </location>
    <ligand>
        <name>Mg(2+)</name>
        <dbReference type="ChEBI" id="CHEBI:18420"/>
    </ligand>
</feature>
<feature type="binding site" evidence="1">
    <location>
        <position position="193"/>
    </location>
    <ligand>
        <name>Mg(2+)</name>
        <dbReference type="ChEBI" id="CHEBI:18420"/>
    </ligand>
</feature>
<feature type="binding site" evidence="1">
    <location>
        <position position="194"/>
    </location>
    <ligand>
        <name>Mg(2+)</name>
        <dbReference type="ChEBI" id="CHEBI:18420"/>
    </ligand>
</feature>
<feature type="binding site" evidence="1">
    <location>
        <position position="288"/>
    </location>
    <ligand>
        <name>substrate</name>
    </ligand>
</feature>
<feature type="binding site" evidence="1">
    <location>
        <position position="321"/>
    </location>
    <ligand>
        <name>substrate</name>
    </ligand>
</feature>
<feature type="binding site" evidence="1">
    <location>
        <position position="368"/>
    </location>
    <ligand>
        <name>substrate</name>
    </ligand>
</feature>
<feature type="site" description="Transition state stabilizer" evidence="1">
    <location>
        <position position="329"/>
    </location>
</feature>
<feature type="modified residue" description="N6-carboxylysine" evidence="1">
    <location>
        <position position="191"/>
    </location>
</feature>
<comment type="function">
    <text evidence="1">RuBisCO catalyzes two reactions: the carboxylation of D-ribulose 1,5-bisphosphate, the primary event in carbon dioxide fixation, as well as the oxidative fragmentation of the pentose substrate. Both reactions occur simultaneously and in competition at the same active site.</text>
</comment>
<comment type="catalytic activity">
    <reaction evidence="1">
        <text>2 (2R)-3-phosphoglycerate + 2 H(+) = D-ribulose 1,5-bisphosphate + CO2 + H2O</text>
        <dbReference type="Rhea" id="RHEA:23124"/>
        <dbReference type="ChEBI" id="CHEBI:15377"/>
        <dbReference type="ChEBI" id="CHEBI:15378"/>
        <dbReference type="ChEBI" id="CHEBI:16526"/>
        <dbReference type="ChEBI" id="CHEBI:57870"/>
        <dbReference type="ChEBI" id="CHEBI:58272"/>
        <dbReference type="EC" id="4.1.1.39"/>
    </reaction>
</comment>
<comment type="catalytic activity">
    <reaction evidence="1">
        <text>D-ribulose 1,5-bisphosphate + O2 = 2-phosphoglycolate + (2R)-3-phosphoglycerate + 2 H(+)</text>
        <dbReference type="Rhea" id="RHEA:36631"/>
        <dbReference type="ChEBI" id="CHEBI:15378"/>
        <dbReference type="ChEBI" id="CHEBI:15379"/>
        <dbReference type="ChEBI" id="CHEBI:57870"/>
        <dbReference type="ChEBI" id="CHEBI:58033"/>
        <dbReference type="ChEBI" id="CHEBI:58272"/>
    </reaction>
</comment>
<comment type="cofactor">
    <cofactor evidence="1">
        <name>Mg(2+)</name>
        <dbReference type="ChEBI" id="CHEBI:18420"/>
    </cofactor>
    <text evidence="1">Binds 1 Mg(2+) ion per subunit.</text>
</comment>
<comment type="subunit">
    <text evidence="1">Homodimer.</text>
</comment>
<comment type="miscellaneous">
    <text evidence="1">The basic functional RuBisCO is composed of a large chain homodimer in a 'head-to-tail' conformation. In contrast to form I RuBisCO, the form II RuBisCO are composed solely of large subunits.</text>
</comment>
<comment type="similarity">
    <text evidence="1">Belongs to the RuBisCO large chain family. Type II subfamily.</text>
</comment>
<evidence type="ECO:0000255" key="1">
    <source>
        <dbReference type="HAMAP-Rule" id="MF_01339"/>
    </source>
</evidence>
<protein>
    <recommendedName>
        <fullName evidence="1">Ribulose bisphosphate carboxylase</fullName>
        <shortName evidence="1">RuBisCO</shortName>
        <ecNumber evidence="1">4.1.1.39</ecNumber>
    </recommendedName>
</protein>
<gene>
    <name evidence="1" type="primary">cbbM</name>
    <name type="ordered locus">Rsph17029_4004</name>
</gene>
<sequence>MDQSNRYARLDLKEADLIAGGRHVLCAYVMKPKAGYGYLETAAHFAAESSTGTNVEVSTTDDFTRGVDALVYEIDPEKEIMKIAYPVELFDRNIIDGRAMLCSFLTLTIGNNQGMGDVEYAKMHDFYVPPCYLRLFDGPSMNIADMWRVLGRDVRNGGMVVGTIIKPKLGLRPKPFADACHEFWLGGDFIKNDEPQGNQTFAPLKETIRLVADAMKRAQDETGEAKLFSANITADDHYEMVARGEYILETFGENADHVAFLVDGYVTGPAAITTARRQFPRQFLHYHRAGHGAVTSPQSMRGYTAFVLSKMARLQGASGIHTGTMGYGKMEGEAADKIMAYMLTDEAAEGPFYRQDWLGLKATTPIISGGMNALRLPGFFDNLGHSNVIQTSGGGAFGHLDGGTAGAKSLRQSHEAWMAGVDLVTYAREHRELARAFESFPADADKFYPGWRDRLQRAA</sequence>
<keyword id="KW-0113">Calvin cycle</keyword>
<keyword id="KW-0120">Carbon dioxide fixation</keyword>
<keyword id="KW-0456">Lyase</keyword>
<keyword id="KW-0460">Magnesium</keyword>
<keyword id="KW-0479">Metal-binding</keyword>
<keyword id="KW-0503">Monooxygenase</keyword>
<keyword id="KW-0560">Oxidoreductase</keyword>
<keyword id="KW-0602">Photosynthesis</keyword>
<organism>
    <name type="scientific">Cereibacter sphaeroides (strain ATCC 17029 / ATH 2.4.9)</name>
    <name type="common">Rhodobacter sphaeroides</name>
    <dbReference type="NCBI Taxonomy" id="349101"/>
    <lineage>
        <taxon>Bacteria</taxon>
        <taxon>Pseudomonadati</taxon>
        <taxon>Pseudomonadota</taxon>
        <taxon>Alphaproteobacteria</taxon>
        <taxon>Rhodobacterales</taxon>
        <taxon>Paracoccaceae</taxon>
        <taxon>Cereibacter</taxon>
    </lineage>
</organism>
<reference key="1">
    <citation type="submission" date="2007-02" db="EMBL/GenBank/DDBJ databases">
        <title>Complete sequence of chromosome 2 of Rhodobacter sphaeroides ATCC 17029.</title>
        <authorList>
            <person name="Copeland A."/>
            <person name="Lucas S."/>
            <person name="Lapidus A."/>
            <person name="Barry K."/>
            <person name="Detter J.C."/>
            <person name="Glavina del Rio T."/>
            <person name="Hammon N."/>
            <person name="Israni S."/>
            <person name="Dalin E."/>
            <person name="Tice H."/>
            <person name="Pitluck S."/>
            <person name="Kiss H."/>
            <person name="Brettin T."/>
            <person name="Bruce D."/>
            <person name="Han C."/>
            <person name="Tapia R."/>
            <person name="Gilna P."/>
            <person name="Schmutz J."/>
            <person name="Larimer F."/>
            <person name="Land M."/>
            <person name="Hauser L."/>
            <person name="Kyrpides N."/>
            <person name="Mikhailova N."/>
            <person name="Richardson P."/>
            <person name="Mackenzie C."/>
            <person name="Choudhary M."/>
            <person name="Donohue T.J."/>
            <person name="Kaplan S."/>
        </authorList>
    </citation>
    <scope>NUCLEOTIDE SEQUENCE [LARGE SCALE GENOMIC DNA]</scope>
    <source>
        <strain>ATCC 17029 / ATH 2.4.9</strain>
    </source>
</reference>
<proteinExistence type="inferred from homology"/>
<name>RBL2_CERS1</name>
<accession>A3PRW6</accession>